<feature type="chain" id="PRO_1000053194" description="ATP synthase gamma chain">
    <location>
        <begin position="1"/>
        <end position="285"/>
    </location>
</feature>
<evidence type="ECO:0000255" key="1">
    <source>
        <dbReference type="HAMAP-Rule" id="MF_00815"/>
    </source>
</evidence>
<sequence>MAGAGLIAIKRRIKSINNTKKITKAIGLVATSKLRKARQKLELNNAYYSSVNEIMNGILADKNLEKGIYFKDNGVNKKLYIVITSDSGLCGGFNGNVIAKTLETISGDRENSVIITVGKKGRTYLKKFKIDSIAEFVEIPEIPTLKEVKAILEKALNLYMNKEISEINVVYTHFVSSVKQEAKVKKILPITMEEDSEQTSTFVEFEPDKNIVLEGISELYLKQTLLNLMLNSKTSEESARMTAMDGATSNANDLLDKLNLQYNRIRQSSITQEISEIVGGAQAQE</sequence>
<keyword id="KW-0066">ATP synthesis</keyword>
<keyword id="KW-1003">Cell membrane</keyword>
<keyword id="KW-0139">CF(1)</keyword>
<keyword id="KW-0375">Hydrogen ion transport</keyword>
<keyword id="KW-0406">Ion transport</keyword>
<keyword id="KW-0472">Membrane</keyword>
<keyword id="KW-1185">Reference proteome</keyword>
<keyword id="KW-0813">Transport</keyword>
<proteinExistence type="inferred from homology"/>
<reference key="1">
    <citation type="journal article" date="2006" name="Nat. Biotechnol.">
        <title>The genome and transcriptomes of the anti-tumor agent Clostridium novyi-NT.</title>
        <authorList>
            <person name="Bettegowda C."/>
            <person name="Huang X."/>
            <person name="Lin J."/>
            <person name="Cheong I."/>
            <person name="Kohli M."/>
            <person name="Szabo S.A."/>
            <person name="Zhang X."/>
            <person name="Diaz L.A. Jr."/>
            <person name="Velculescu V.E."/>
            <person name="Parmigiani G."/>
            <person name="Kinzler K.W."/>
            <person name="Vogelstein B."/>
            <person name="Zhou S."/>
        </authorList>
    </citation>
    <scope>NUCLEOTIDE SEQUENCE [LARGE SCALE GENOMIC DNA]</scope>
    <source>
        <strain>NT</strain>
    </source>
</reference>
<comment type="function">
    <text evidence="1">Produces ATP from ADP in the presence of a proton gradient across the membrane. The gamma chain is believed to be important in regulating ATPase activity and the flow of protons through the CF(0) complex.</text>
</comment>
<comment type="subunit">
    <text evidence="1">F-type ATPases have 2 components, CF(1) - the catalytic core - and CF(0) - the membrane proton channel. CF(1) has five subunits: alpha(3), beta(3), gamma(1), delta(1), epsilon(1). CF(0) has three main subunits: a, b and c.</text>
</comment>
<comment type="subcellular location">
    <subcellularLocation>
        <location evidence="1">Cell membrane</location>
        <topology evidence="1">Peripheral membrane protein</topology>
    </subcellularLocation>
</comment>
<comment type="similarity">
    <text evidence="1">Belongs to the ATPase gamma chain family.</text>
</comment>
<name>ATPG_CLONN</name>
<gene>
    <name evidence="1" type="primary">atpG</name>
    <name type="ordered locus">NT01CX_0531</name>
</gene>
<protein>
    <recommendedName>
        <fullName evidence="1">ATP synthase gamma chain</fullName>
    </recommendedName>
    <alternativeName>
        <fullName evidence="1">ATP synthase F1 sector gamma subunit</fullName>
    </alternativeName>
    <alternativeName>
        <fullName evidence="1">F-ATPase gamma subunit</fullName>
    </alternativeName>
</protein>
<dbReference type="EMBL" id="CP000382">
    <property type="protein sequence ID" value="ABK61837.1"/>
    <property type="molecule type" value="Genomic_DNA"/>
</dbReference>
<dbReference type="RefSeq" id="WP_011722977.1">
    <property type="nucleotide sequence ID" value="NC_008593.1"/>
</dbReference>
<dbReference type="SMR" id="A0Q2Z5"/>
<dbReference type="STRING" id="386415.NT01CX_0531"/>
<dbReference type="KEGG" id="cno:NT01CX_0531"/>
<dbReference type="PATRIC" id="fig|386415.7.peg.2035"/>
<dbReference type="eggNOG" id="COG0224">
    <property type="taxonomic scope" value="Bacteria"/>
</dbReference>
<dbReference type="HOGENOM" id="CLU_050669_0_1_9"/>
<dbReference type="Proteomes" id="UP000008220">
    <property type="component" value="Chromosome"/>
</dbReference>
<dbReference type="GO" id="GO:0005886">
    <property type="term" value="C:plasma membrane"/>
    <property type="evidence" value="ECO:0007669"/>
    <property type="project" value="UniProtKB-SubCell"/>
</dbReference>
<dbReference type="GO" id="GO:0045259">
    <property type="term" value="C:proton-transporting ATP synthase complex"/>
    <property type="evidence" value="ECO:0007669"/>
    <property type="project" value="UniProtKB-KW"/>
</dbReference>
<dbReference type="GO" id="GO:0005524">
    <property type="term" value="F:ATP binding"/>
    <property type="evidence" value="ECO:0007669"/>
    <property type="project" value="UniProtKB-UniRule"/>
</dbReference>
<dbReference type="GO" id="GO:0046933">
    <property type="term" value="F:proton-transporting ATP synthase activity, rotational mechanism"/>
    <property type="evidence" value="ECO:0007669"/>
    <property type="project" value="UniProtKB-UniRule"/>
</dbReference>
<dbReference type="GO" id="GO:0042777">
    <property type="term" value="P:proton motive force-driven plasma membrane ATP synthesis"/>
    <property type="evidence" value="ECO:0007669"/>
    <property type="project" value="UniProtKB-UniRule"/>
</dbReference>
<dbReference type="CDD" id="cd12151">
    <property type="entry name" value="F1-ATPase_gamma"/>
    <property type="match status" value="1"/>
</dbReference>
<dbReference type="Gene3D" id="3.40.1380.10">
    <property type="match status" value="1"/>
</dbReference>
<dbReference type="Gene3D" id="1.10.287.80">
    <property type="entry name" value="ATP synthase, gamma subunit, helix hairpin domain"/>
    <property type="match status" value="1"/>
</dbReference>
<dbReference type="HAMAP" id="MF_00815">
    <property type="entry name" value="ATP_synth_gamma_bact"/>
    <property type="match status" value="1"/>
</dbReference>
<dbReference type="InterPro" id="IPR035968">
    <property type="entry name" value="ATP_synth_F1_ATPase_gsu"/>
</dbReference>
<dbReference type="InterPro" id="IPR000131">
    <property type="entry name" value="ATP_synth_F1_gsu"/>
</dbReference>
<dbReference type="InterPro" id="IPR023632">
    <property type="entry name" value="ATP_synth_F1_gsu_CS"/>
</dbReference>
<dbReference type="NCBIfam" id="TIGR01146">
    <property type="entry name" value="ATPsyn_F1gamma"/>
    <property type="match status" value="1"/>
</dbReference>
<dbReference type="PANTHER" id="PTHR11693">
    <property type="entry name" value="ATP SYNTHASE GAMMA CHAIN"/>
    <property type="match status" value="1"/>
</dbReference>
<dbReference type="PANTHER" id="PTHR11693:SF22">
    <property type="entry name" value="ATP SYNTHASE SUBUNIT GAMMA, MITOCHONDRIAL"/>
    <property type="match status" value="1"/>
</dbReference>
<dbReference type="Pfam" id="PF00231">
    <property type="entry name" value="ATP-synt"/>
    <property type="match status" value="1"/>
</dbReference>
<dbReference type="PRINTS" id="PR00126">
    <property type="entry name" value="ATPASEGAMMA"/>
</dbReference>
<dbReference type="SUPFAM" id="SSF52943">
    <property type="entry name" value="ATP synthase (F1-ATPase), gamma subunit"/>
    <property type="match status" value="1"/>
</dbReference>
<dbReference type="PROSITE" id="PS00153">
    <property type="entry name" value="ATPASE_GAMMA"/>
    <property type="match status" value="1"/>
</dbReference>
<accession>A0Q2Z5</accession>
<organism>
    <name type="scientific">Clostridium novyi (strain NT)</name>
    <dbReference type="NCBI Taxonomy" id="386415"/>
    <lineage>
        <taxon>Bacteria</taxon>
        <taxon>Bacillati</taxon>
        <taxon>Bacillota</taxon>
        <taxon>Clostridia</taxon>
        <taxon>Eubacteriales</taxon>
        <taxon>Clostridiaceae</taxon>
        <taxon>Clostridium</taxon>
    </lineage>
</organism>